<protein>
    <recommendedName>
        <fullName>Probable lipoate-protein ligase A</fullName>
        <shortName>Lipoate--protein ligase</shortName>
        <ecNumber>6.3.1.20</ecNumber>
    </recommendedName>
</protein>
<proteinExistence type="inferred from homology"/>
<sequence>MQTFIITSPVFNPYFNAALEEWLLTEFRKNELVKVIYFWQNANTIVVGRNQNTYAEVNLKELESDKVNLFRRFSGGGAVFHDLGNICFSIILPRTGKVMENAYEQTTRNVVKFLNSLNVPAVFHGRNDLEINNKKFSGLAEYIAKDRLLVHGTLLFDTDFSKLAKYLNVDKTKIASKGVDSVAKRVVNVKEYLPNWTTAKFLEEMINFFTVTEKAETIVLTKDALAKVEKRAKEHFQSWEWNFGKTYEYNFKNKRYFNNAGLFECNVQVEKGTVVDIKFYGDFLSVVDITPVTKKLIGQKYDYKTFEKLFNELDHFSDYFGSLKPEQLLGVIFDNK</sequence>
<dbReference type="EC" id="6.3.1.20"/>
<dbReference type="EMBL" id="L43967">
    <property type="protein sequence ID" value="AAC71492.1"/>
    <property type="molecule type" value="Genomic_DNA"/>
</dbReference>
<dbReference type="PIR" id="H64229">
    <property type="entry name" value="H64229"/>
</dbReference>
<dbReference type="RefSeq" id="WP_009885902.1">
    <property type="nucleotide sequence ID" value="NC_000908.2"/>
</dbReference>
<dbReference type="SMR" id="P47512"/>
<dbReference type="FunCoup" id="P47512">
    <property type="interactions" value="112"/>
</dbReference>
<dbReference type="STRING" id="243273.MG_270"/>
<dbReference type="GeneID" id="88282426"/>
<dbReference type="KEGG" id="mge:MG_270"/>
<dbReference type="eggNOG" id="COG0095">
    <property type="taxonomic scope" value="Bacteria"/>
</dbReference>
<dbReference type="HOGENOM" id="CLU_022986_0_2_14"/>
<dbReference type="InParanoid" id="P47512"/>
<dbReference type="OrthoDB" id="9788148at2"/>
<dbReference type="BioCyc" id="MGEN243273:G1GJ2-328-MONOMER"/>
<dbReference type="UniPathway" id="UPA00537">
    <property type="reaction ID" value="UER00594"/>
</dbReference>
<dbReference type="UniPathway" id="UPA00537">
    <property type="reaction ID" value="UER00595"/>
</dbReference>
<dbReference type="Proteomes" id="UP000000807">
    <property type="component" value="Chromosome"/>
</dbReference>
<dbReference type="GO" id="GO:0005737">
    <property type="term" value="C:cytoplasm"/>
    <property type="evidence" value="ECO:0000318"/>
    <property type="project" value="GO_Central"/>
</dbReference>
<dbReference type="GO" id="GO:0005524">
    <property type="term" value="F:ATP binding"/>
    <property type="evidence" value="ECO:0007669"/>
    <property type="project" value="UniProtKB-KW"/>
</dbReference>
<dbReference type="GO" id="GO:0016979">
    <property type="term" value="F:lipoate-protein ligase activity"/>
    <property type="evidence" value="ECO:0000318"/>
    <property type="project" value="GO_Central"/>
</dbReference>
<dbReference type="GO" id="GO:0017118">
    <property type="term" value="F:lipoyltransferase activity"/>
    <property type="evidence" value="ECO:0000318"/>
    <property type="project" value="GO_Central"/>
</dbReference>
<dbReference type="GO" id="GO:0036211">
    <property type="term" value="P:protein modification process"/>
    <property type="evidence" value="ECO:0007669"/>
    <property type="project" value="InterPro"/>
</dbReference>
<dbReference type="CDD" id="cd16443">
    <property type="entry name" value="LplA"/>
    <property type="match status" value="1"/>
</dbReference>
<dbReference type="Gene3D" id="3.30.930.10">
    <property type="entry name" value="Bira Bifunctional Protein, Domain 2"/>
    <property type="match status" value="1"/>
</dbReference>
<dbReference type="Gene3D" id="3.30.390.50">
    <property type="entry name" value="CO dehydrogenase flavoprotein, C-terminal domain"/>
    <property type="match status" value="1"/>
</dbReference>
<dbReference type="InterPro" id="IPR045864">
    <property type="entry name" value="aa-tRNA-synth_II/BPL/LPL"/>
</dbReference>
<dbReference type="InterPro" id="IPR004143">
    <property type="entry name" value="BPL_LPL_catalytic"/>
</dbReference>
<dbReference type="InterPro" id="IPR019491">
    <property type="entry name" value="Lipoate_protein_ligase_C"/>
</dbReference>
<dbReference type="InterPro" id="IPR004562">
    <property type="entry name" value="LipoylTrfase_LipoateP_Ligase"/>
</dbReference>
<dbReference type="NCBIfam" id="TIGR00545">
    <property type="entry name" value="lipoyltrans"/>
    <property type="match status" value="1"/>
</dbReference>
<dbReference type="PANTHER" id="PTHR12561">
    <property type="entry name" value="LIPOATE-PROTEIN LIGASE"/>
    <property type="match status" value="1"/>
</dbReference>
<dbReference type="PANTHER" id="PTHR12561:SF3">
    <property type="entry name" value="LIPOYLTRANSFERASE 1, MITOCHONDRIAL"/>
    <property type="match status" value="1"/>
</dbReference>
<dbReference type="Pfam" id="PF10437">
    <property type="entry name" value="Lip_prot_lig_C"/>
    <property type="match status" value="1"/>
</dbReference>
<dbReference type="Pfam" id="PF21948">
    <property type="entry name" value="LplA-B_cat"/>
    <property type="match status" value="1"/>
</dbReference>
<dbReference type="SUPFAM" id="SSF55681">
    <property type="entry name" value="Class II aaRS and biotin synthetases"/>
    <property type="match status" value="1"/>
</dbReference>
<dbReference type="SUPFAM" id="SSF82649">
    <property type="entry name" value="SufE/NifU"/>
    <property type="match status" value="1"/>
</dbReference>
<dbReference type="PROSITE" id="PS51733">
    <property type="entry name" value="BPL_LPL_CATALYTIC"/>
    <property type="match status" value="1"/>
</dbReference>
<accession>P47512</accession>
<evidence type="ECO:0000250" key="1"/>
<evidence type="ECO:0000255" key="2">
    <source>
        <dbReference type="PROSITE-ProRule" id="PRU01067"/>
    </source>
</evidence>
<evidence type="ECO:0000305" key="3"/>
<organism>
    <name type="scientific">Mycoplasma genitalium (strain ATCC 33530 / DSM 19775 / NCTC 10195 / G37)</name>
    <name type="common">Mycoplasmoides genitalium</name>
    <dbReference type="NCBI Taxonomy" id="243273"/>
    <lineage>
        <taxon>Bacteria</taxon>
        <taxon>Bacillati</taxon>
        <taxon>Mycoplasmatota</taxon>
        <taxon>Mycoplasmoidales</taxon>
        <taxon>Mycoplasmoidaceae</taxon>
        <taxon>Mycoplasmoides</taxon>
    </lineage>
</organism>
<keyword id="KW-0067">ATP-binding</keyword>
<keyword id="KW-0963">Cytoplasm</keyword>
<keyword id="KW-0436">Ligase</keyword>
<keyword id="KW-0547">Nucleotide-binding</keyword>
<keyword id="KW-1185">Reference proteome</keyword>
<gene>
    <name type="primary">lplA</name>
    <name type="ordered locus">MG270</name>
</gene>
<comment type="function">
    <text evidence="1">Catalyzes both the ATP-dependent activation of exogenously supplied lipoate to lipoyl-AMP and the transfer of the activated lipoyl onto the lipoyl domains of lipoate-dependent enzymes.</text>
</comment>
<comment type="catalytic activity">
    <reaction>
        <text>L-lysyl-[lipoyl-carrier protein] + (R)-lipoate + ATP = N(6)-[(R)-lipoyl]-L-lysyl-[lipoyl-carrier protein] + AMP + diphosphate + H(+)</text>
        <dbReference type="Rhea" id="RHEA:49288"/>
        <dbReference type="Rhea" id="RHEA-COMP:10500"/>
        <dbReference type="Rhea" id="RHEA-COMP:10502"/>
        <dbReference type="ChEBI" id="CHEBI:15378"/>
        <dbReference type="ChEBI" id="CHEBI:29969"/>
        <dbReference type="ChEBI" id="CHEBI:30616"/>
        <dbReference type="ChEBI" id="CHEBI:33019"/>
        <dbReference type="ChEBI" id="CHEBI:83088"/>
        <dbReference type="ChEBI" id="CHEBI:83099"/>
        <dbReference type="ChEBI" id="CHEBI:456215"/>
        <dbReference type="EC" id="6.3.1.20"/>
    </reaction>
</comment>
<comment type="pathway">
    <text>Protein modification; protein lipoylation via exogenous pathway; protein N(6)-(lipoyl)lysine from lipoate: step 1/2.</text>
</comment>
<comment type="pathway">
    <text>Protein modification; protein lipoylation via exogenous pathway; protein N(6)-(lipoyl)lysine from lipoate: step 2/2.</text>
</comment>
<comment type="subcellular location">
    <subcellularLocation>
        <location evidence="1">Cytoplasm</location>
    </subcellularLocation>
</comment>
<comment type="miscellaneous">
    <text evidence="1">In the transfer reaction, the free carboxyl group of lipoic acid is attached via an amide linkage to the epsilon-amino group of a specific lysine residue of lipoyl domains of lipoate-dependent enzymes.</text>
</comment>
<comment type="similarity">
    <text evidence="3">Belongs to the LplA family.</text>
</comment>
<name>LPLA_MYCGE</name>
<feature type="chain" id="PRO_0000209567" description="Probable lipoate-protein ligase A">
    <location>
        <begin position="1"/>
        <end position="336"/>
    </location>
</feature>
<feature type="domain" description="BPL/LPL catalytic" evidence="2">
    <location>
        <begin position="30"/>
        <end position="217"/>
    </location>
</feature>
<feature type="binding site" evidence="1">
    <location>
        <position position="72"/>
    </location>
    <ligand>
        <name>ATP</name>
        <dbReference type="ChEBI" id="CHEBI:30616"/>
    </ligand>
</feature>
<feature type="binding site" evidence="1">
    <location>
        <begin position="77"/>
        <end position="80"/>
    </location>
    <ligand>
        <name>ATP</name>
        <dbReference type="ChEBI" id="CHEBI:30616"/>
    </ligand>
</feature>
<feature type="binding site" evidence="1">
    <location>
        <position position="135"/>
    </location>
    <ligand>
        <name>(R)-lipoate</name>
        <dbReference type="ChEBI" id="CHEBI:83088"/>
    </ligand>
</feature>
<feature type="binding site" evidence="1">
    <location>
        <position position="135"/>
    </location>
    <ligand>
        <name>ATP</name>
        <dbReference type="ChEBI" id="CHEBI:30616"/>
    </ligand>
</feature>
<reference key="1">
    <citation type="journal article" date="1995" name="Science">
        <title>The minimal gene complement of Mycoplasma genitalium.</title>
        <authorList>
            <person name="Fraser C.M."/>
            <person name="Gocayne J.D."/>
            <person name="White O."/>
            <person name="Adams M.D."/>
            <person name="Clayton R.A."/>
            <person name="Fleischmann R.D."/>
            <person name="Bult C.J."/>
            <person name="Kerlavage A.R."/>
            <person name="Sutton G.G."/>
            <person name="Kelley J.M."/>
            <person name="Fritchman J.L."/>
            <person name="Weidman J.F."/>
            <person name="Small K.V."/>
            <person name="Sandusky M."/>
            <person name="Fuhrmann J.L."/>
            <person name="Nguyen D.T."/>
            <person name="Utterback T.R."/>
            <person name="Saudek D.M."/>
            <person name="Phillips C.A."/>
            <person name="Merrick J.M."/>
            <person name="Tomb J.-F."/>
            <person name="Dougherty B.A."/>
            <person name="Bott K.F."/>
            <person name="Hu P.-C."/>
            <person name="Lucier T.S."/>
            <person name="Peterson S.N."/>
            <person name="Smith H.O."/>
            <person name="Hutchison C.A. III"/>
            <person name="Venter J.C."/>
        </authorList>
    </citation>
    <scope>NUCLEOTIDE SEQUENCE [LARGE SCALE GENOMIC DNA]</scope>
    <source>
        <strain>ATCC 33530 / DSM 19775 / NCTC 10195 / G37</strain>
    </source>
</reference>